<proteinExistence type="inferred from homology"/>
<comment type="subcellular location">
    <subcellularLocation>
        <location evidence="1">Cell inner membrane</location>
        <topology evidence="1">Multi-pass membrane protein</topology>
    </subcellularLocation>
</comment>
<comment type="similarity">
    <text evidence="1">Belongs to the UPF0283 family.</text>
</comment>
<keyword id="KW-0997">Cell inner membrane</keyword>
<keyword id="KW-1003">Cell membrane</keyword>
<keyword id="KW-0472">Membrane</keyword>
<keyword id="KW-0812">Transmembrane</keyword>
<keyword id="KW-1133">Transmembrane helix</keyword>
<gene>
    <name evidence="1" type="primary">ycjF</name>
    <name type="ordered locus">SeAg_B1466</name>
</gene>
<sequence>MSEPLKPRIDFAEPLKEEPTSAFKAQQTFSEAESRTFAPAAIDERPEDEGVAEAAVDAALRPKRSLWRKMVMGGLALFGASVVGQGIQWTMNAWQTQDWVALGGCAAGALIVGAGVGSVVTEWRRLWRLRQRAHERDEARELLHSHSVGKGRAFCEKLAQQAGIDQSHPALQRWYAAIHETQNDREIVGLYAHLVQPVLDAQARREISRFAAESTLMIAVSPLALVDMAFIAWRNLRLINRIATLYGIELGYYSRLRLFRLVLLNIAFAGASELVREVGMDWMSQDLAARLSTRAAQGIGAGLLTARLGIKAMELCRPLPWIDNDKPRLGDFRRQLIGQLKETLQKSKSSPEK</sequence>
<feature type="chain" id="PRO_1000136893" description="UPF0283 membrane protein YcjF">
    <location>
        <begin position="1"/>
        <end position="353"/>
    </location>
</feature>
<feature type="transmembrane region" description="Helical" evidence="1">
    <location>
        <begin position="70"/>
        <end position="90"/>
    </location>
</feature>
<feature type="transmembrane region" description="Helical" evidence="1">
    <location>
        <begin position="100"/>
        <end position="120"/>
    </location>
</feature>
<feature type="transmembrane region" description="Helical" evidence="1">
    <location>
        <begin position="213"/>
        <end position="233"/>
    </location>
</feature>
<feature type="region of interest" description="Disordered" evidence="2">
    <location>
        <begin position="1"/>
        <end position="35"/>
    </location>
</feature>
<feature type="compositionally biased region" description="Basic and acidic residues" evidence="2">
    <location>
        <begin position="1"/>
        <end position="19"/>
    </location>
</feature>
<organism>
    <name type="scientific">Salmonella agona (strain SL483)</name>
    <dbReference type="NCBI Taxonomy" id="454166"/>
    <lineage>
        <taxon>Bacteria</taxon>
        <taxon>Pseudomonadati</taxon>
        <taxon>Pseudomonadota</taxon>
        <taxon>Gammaproteobacteria</taxon>
        <taxon>Enterobacterales</taxon>
        <taxon>Enterobacteriaceae</taxon>
        <taxon>Salmonella</taxon>
    </lineage>
</organism>
<dbReference type="EMBL" id="CP001138">
    <property type="protein sequence ID" value="ACH50715.1"/>
    <property type="molecule type" value="Genomic_DNA"/>
</dbReference>
<dbReference type="RefSeq" id="WP_001294461.1">
    <property type="nucleotide sequence ID" value="NC_011149.1"/>
</dbReference>
<dbReference type="KEGG" id="sea:SeAg_B1466"/>
<dbReference type="HOGENOM" id="CLU_057693_2_0_6"/>
<dbReference type="Proteomes" id="UP000008819">
    <property type="component" value="Chromosome"/>
</dbReference>
<dbReference type="GO" id="GO:0005886">
    <property type="term" value="C:plasma membrane"/>
    <property type="evidence" value="ECO:0007669"/>
    <property type="project" value="UniProtKB-SubCell"/>
</dbReference>
<dbReference type="HAMAP" id="MF_01085">
    <property type="entry name" value="UPF0283"/>
    <property type="match status" value="1"/>
</dbReference>
<dbReference type="InterPro" id="IPR021147">
    <property type="entry name" value="DUF697"/>
</dbReference>
<dbReference type="InterPro" id="IPR006507">
    <property type="entry name" value="UPF0283"/>
</dbReference>
<dbReference type="NCBIfam" id="TIGR01620">
    <property type="entry name" value="hyp_HI0043"/>
    <property type="match status" value="1"/>
</dbReference>
<dbReference type="PANTHER" id="PTHR39342">
    <property type="entry name" value="UPF0283 MEMBRANE PROTEIN YCJF"/>
    <property type="match status" value="1"/>
</dbReference>
<dbReference type="PANTHER" id="PTHR39342:SF1">
    <property type="entry name" value="UPF0283 MEMBRANE PROTEIN YCJF"/>
    <property type="match status" value="1"/>
</dbReference>
<dbReference type="Pfam" id="PF05128">
    <property type="entry name" value="DUF697"/>
    <property type="match status" value="1"/>
</dbReference>
<protein>
    <recommendedName>
        <fullName evidence="1">UPF0283 membrane protein YcjF</fullName>
    </recommendedName>
</protein>
<accession>B5F588</accession>
<reference key="1">
    <citation type="journal article" date="2011" name="J. Bacteriol.">
        <title>Comparative genomics of 28 Salmonella enterica isolates: evidence for CRISPR-mediated adaptive sublineage evolution.</title>
        <authorList>
            <person name="Fricke W.F."/>
            <person name="Mammel M.K."/>
            <person name="McDermott P.F."/>
            <person name="Tartera C."/>
            <person name="White D.G."/>
            <person name="Leclerc J.E."/>
            <person name="Ravel J."/>
            <person name="Cebula T.A."/>
        </authorList>
    </citation>
    <scope>NUCLEOTIDE SEQUENCE [LARGE SCALE GENOMIC DNA]</scope>
    <source>
        <strain>SL483</strain>
    </source>
</reference>
<name>YCJF_SALA4</name>
<evidence type="ECO:0000255" key="1">
    <source>
        <dbReference type="HAMAP-Rule" id="MF_01085"/>
    </source>
</evidence>
<evidence type="ECO:0000256" key="2">
    <source>
        <dbReference type="SAM" id="MobiDB-lite"/>
    </source>
</evidence>